<comment type="function">
    <text evidence="1">Binds directly to 23S rRNA. The L1 stalk is quite mobile in the ribosome, and is involved in E site tRNA release.</text>
</comment>
<comment type="function">
    <text evidence="1">Protein L1 is also a translational repressor protein, it controls the translation of the L11 operon by binding to its mRNA.</text>
</comment>
<comment type="subunit">
    <text evidence="1">Part of the 50S ribosomal subunit.</text>
</comment>
<comment type="similarity">
    <text evidence="1">Belongs to the universal ribosomal protein uL1 family.</text>
</comment>
<name>RL1_MARSD</name>
<evidence type="ECO:0000255" key="1">
    <source>
        <dbReference type="HAMAP-Rule" id="MF_01318"/>
    </source>
</evidence>
<evidence type="ECO:0000305" key="2"/>
<dbReference type="EMBL" id="CP001649">
    <property type="protein sequence ID" value="ACS79239.1"/>
    <property type="molecule type" value="Genomic_DNA"/>
</dbReference>
<dbReference type="RefSeq" id="WP_015851058.1">
    <property type="nucleotide sequence ID" value="NC_012881.1"/>
</dbReference>
<dbReference type="SMR" id="C6C176"/>
<dbReference type="STRING" id="526222.Desal_1176"/>
<dbReference type="KEGG" id="dsa:Desal_1176"/>
<dbReference type="eggNOG" id="COG0081">
    <property type="taxonomic scope" value="Bacteria"/>
</dbReference>
<dbReference type="HOGENOM" id="CLU_062853_0_0_7"/>
<dbReference type="OrthoDB" id="9803740at2"/>
<dbReference type="Proteomes" id="UP000002601">
    <property type="component" value="Chromosome"/>
</dbReference>
<dbReference type="GO" id="GO:0022625">
    <property type="term" value="C:cytosolic large ribosomal subunit"/>
    <property type="evidence" value="ECO:0007669"/>
    <property type="project" value="TreeGrafter"/>
</dbReference>
<dbReference type="GO" id="GO:0019843">
    <property type="term" value="F:rRNA binding"/>
    <property type="evidence" value="ECO:0007669"/>
    <property type="project" value="UniProtKB-UniRule"/>
</dbReference>
<dbReference type="GO" id="GO:0003735">
    <property type="term" value="F:structural constituent of ribosome"/>
    <property type="evidence" value="ECO:0007669"/>
    <property type="project" value="InterPro"/>
</dbReference>
<dbReference type="GO" id="GO:0000049">
    <property type="term" value="F:tRNA binding"/>
    <property type="evidence" value="ECO:0007669"/>
    <property type="project" value="UniProtKB-KW"/>
</dbReference>
<dbReference type="GO" id="GO:0006417">
    <property type="term" value="P:regulation of translation"/>
    <property type="evidence" value="ECO:0007669"/>
    <property type="project" value="UniProtKB-KW"/>
</dbReference>
<dbReference type="GO" id="GO:0006412">
    <property type="term" value="P:translation"/>
    <property type="evidence" value="ECO:0007669"/>
    <property type="project" value="UniProtKB-UniRule"/>
</dbReference>
<dbReference type="CDD" id="cd00403">
    <property type="entry name" value="Ribosomal_L1"/>
    <property type="match status" value="1"/>
</dbReference>
<dbReference type="FunFam" id="3.40.50.790:FF:000001">
    <property type="entry name" value="50S ribosomal protein L1"/>
    <property type="match status" value="1"/>
</dbReference>
<dbReference type="Gene3D" id="3.30.190.20">
    <property type="match status" value="1"/>
</dbReference>
<dbReference type="Gene3D" id="3.40.50.790">
    <property type="match status" value="1"/>
</dbReference>
<dbReference type="HAMAP" id="MF_01318_B">
    <property type="entry name" value="Ribosomal_uL1_B"/>
    <property type="match status" value="1"/>
</dbReference>
<dbReference type="InterPro" id="IPR005878">
    <property type="entry name" value="Ribosom_uL1_bac-type"/>
</dbReference>
<dbReference type="InterPro" id="IPR002143">
    <property type="entry name" value="Ribosomal_uL1"/>
</dbReference>
<dbReference type="InterPro" id="IPR023674">
    <property type="entry name" value="Ribosomal_uL1-like"/>
</dbReference>
<dbReference type="InterPro" id="IPR028364">
    <property type="entry name" value="Ribosomal_uL1/biogenesis"/>
</dbReference>
<dbReference type="InterPro" id="IPR016095">
    <property type="entry name" value="Ribosomal_uL1_3-a/b-sand"/>
</dbReference>
<dbReference type="InterPro" id="IPR023673">
    <property type="entry name" value="Ribosomal_uL1_CS"/>
</dbReference>
<dbReference type="NCBIfam" id="TIGR01169">
    <property type="entry name" value="rplA_bact"/>
    <property type="match status" value="1"/>
</dbReference>
<dbReference type="PANTHER" id="PTHR36427">
    <property type="entry name" value="54S RIBOSOMAL PROTEIN L1, MITOCHONDRIAL"/>
    <property type="match status" value="1"/>
</dbReference>
<dbReference type="PANTHER" id="PTHR36427:SF3">
    <property type="entry name" value="LARGE RIBOSOMAL SUBUNIT PROTEIN UL1M"/>
    <property type="match status" value="1"/>
</dbReference>
<dbReference type="Pfam" id="PF00687">
    <property type="entry name" value="Ribosomal_L1"/>
    <property type="match status" value="1"/>
</dbReference>
<dbReference type="PIRSF" id="PIRSF002155">
    <property type="entry name" value="Ribosomal_L1"/>
    <property type="match status" value="1"/>
</dbReference>
<dbReference type="SUPFAM" id="SSF56808">
    <property type="entry name" value="Ribosomal protein L1"/>
    <property type="match status" value="1"/>
</dbReference>
<dbReference type="PROSITE" id="PS01199">
    <property type="entry name" value="RIBOSOMAL_L1"/>
    <property type="match status" value="1"/>
</dbReference>
<keyword id="KW-1185">Reference proteome</keyword>
<keyword id="KW-0678">Repressor</keyword>
<keyword id="KW-0687">Ribonucleoprotein</keyword>
<keyword id="KW-0689">Ribosomal protein</keyword>
<keyword id="KW-0694">RNA-binding</keyword>
<keyword id="KW-0699">rRNA-binding</keyword>
<keyword id="KW-0810">Translation regulation</keyword>
<keyword id="KW-0820">tRNA-binding</keyword>
<gene>
    <name evidence="1" type="primary">rplA</name>
    <name type="ordered locus">Desal_1176</name>
</gene>
<organism>
    <name type="scientific">Maridesulfovibrio salexigens (strain ATCC 14822 / DSM 2638 / NCIMB 8403 / VKM B-1763)</name>
    <name type="common">Desulfovibrio salexigens</name>
    <dbReference type="NCBI Taxonomy" id="526222"/>
    <lineage>
        <taxon>Bacteria</taxon>
        <taxon>Pseudomonadati</taxon>
        <taxon>Thermodesulfobacteriota</taxon>
        <taxon>Desulfovibrionia</taxon>
        <taxon>Desulfovibrionales</taxon>
        <taxon>Desulfovibrionaceae</taxon>
        <taxon>Maridesulfovibrio</taxon>
    </lineage>
</organism>
<proteinExistence type="inferred from homology"/>
<protein>
    <recommendedName>
        <fullName evidence="1">Large ribosomal subunit protein uL1</fullName>
    </recommendedName>
    <alternativeName>
        <fullName evidence="2">50S ribosomal protein L1</fullName>
    </alternativeName>
</protein>
<reference key="1">
    <citation type="submission" date="2009-06" db="EMBL/GenBank/DDBJ databases">
        <title>Complete sequence of Desulfovibrio salexigens DSM 2638.</title>
        <authorList>
            <consortium name="US DOE Joint Genome Institute"/>
            <person name="Lucas S."/>
            <person name="Copeland A."/>
            <person name="Lapidus A."/>
            <person name="Glavina del Rio T."/>
            <person name="Tice H."/>
            <person name="Bruce D."/>
            <person name="Goodwin L."/>
            <person name="Pitluck S."/>
            <person name="Munk A.C."/>
            <person name="Brettin T."/>
            <person name="Detter J.C."/>
            <person name="Han C."/>
            <person name="Tapia R."/>
            <person name="Larimer F."/>
            <person name="Land M."/>
            <person name="Hauser L."/>
            <person name="Kyrpides N."/>
            <person name="Anderson I."/>
            <person name="Wall J.D."/>
            <person name="Arkin A.P."/>
            <person name="Dehal P."/>
            <person name="Chivian D."/>
            <person name="Giles B."/>
            <person name="Hazen T.C."/>
        </authorList>
    </citation>
    <scope>NUCLEOTIDE SEQUENCE [LARGE SCALE GENOMIC DNA]</scope>
    <source>
        <strain>ATCC 14822 / DSM 2638 / NCIMB 8403 / VKM B-1763</strain>
    </source>
</reference>
<sequence>MPKHGKKYRKATEGTEQIGLTVEQAVASAVEKAYAKFDETVDVAINLGVDPKYSDQMIRGAVTLPNGLGKEIRVACFVSGEKEAEAKEAGADFVGGDDLVAKVKDGWLDFDKAIATPDMMAKVGQIGRVLGPRGLMPNAKTGTVTFDVASAVKEVKAGRVEFKVDKAGVLHAPIGKVSFGAEKLLENLKSLLETVNKLKPSSAKGTYMKAVAVATTMGPGFKIDPLAARKYSES</sequence>
<accession>C6C176</accession>
<feature type="chain" id="PRO_1000214416" description="Large ribosomal subunit protein uL1">
    <location>
        <begin position="1"/>
        <end position="234"/>
    </location>
</feature>